<dbReference type="EC" id="3.6.1.23" evidence="1"/>
<dbReference type="EMBL" id="CP000148">
    <property type="protein sequence ID" value="ABB31825.1"/>
    <property type="molecule type" value="Genomic_DNA"/>
</dbReference>
<dbReference type="RefSeq" id="WP_004511472.1">
    <property type="nucleotide sequence ID" value="NC_007517.1"/>
</dbReference>
<dbReference type="SMR" id="Q39V99"/>
<dbReference type="STRING" id="269799.Gmet_1593"/>
<dbReference type="KEGG" id="gme:Gmet_1593"/>
<dbReference type="eggNOG" id="COG0756">
    <property type="taxonomic scope" value="Bacteria"/>
</dbReference>
<dbReference type="HOGENOM" id="CLU_068508_1_2_7"/>
<dbReference type="UniPathway" id="UPA00610">
    <property type="reaction ID" value="UER00666"/>
</dbReference>
<dbReference type="Proteomes" id="UP000007073">
    <property type="component" value="Chromosome"/>
</dbReference>
<dbReference type="GO" id="GO:0004170">
    <property type="term" value="F:dUTP diphosphatase activity"/>
    <property type="evidence" value="ECO:0007669"/>
    <property type="project" value="UniProtKB-UniRule"/>
</dbReference>
<dbReference type="GO" id="GO:0000287">
    <property type="term" value="F:magnesium ion binding"/>
    <property type="evidence" value="ECO:0007669"/>
    <property type="project" value="UniProtKB-UniRule"/>
</dbReference>
<dbReference type="GO" id="GO:0006226">
    <property type="term" value="P:dUMP biosynthetic process"/>
    <property type="evidence" value="ECO:0007669"/>
    <property type="project" value="UniProtKB-UniRule"/>
</dbReference>
<dbReference type="GO" id="GO:0046081">
    <property type="term" value="P:dUTP catabolic process"/>
    <property type="evidence" value="ECO:0007669"/>
    <property type="project" value="InterPro"/>
</dbReference>
<dbReference type="CDD" id="cd07557">
    <property type="entry name" value="trimeric_dUTPase"/>
    <property type="match status" value="1"/>
</dbReference>
<dbReference type="FunFam" id="2.70.40.10:FF:000002">
    <property type="entry name" value="dUTP diphosphatase"/>
    <property type="match status" value="1"/>
</dbReference>
<dbReference type="Gene3D" id="2.70.40.10">
    <property type="match status" value="1"/>
</dbReference>
<dbReference type="HAMAP" id="MF_00116">
    <property type="entry name" value="dUTPase_bact"/>
    <property type="match status" value="1"/>
</dbReference>
<dbReference type="InterPro" id="IPR008181">
    <property type="entry name" value="dUTPase"/>
</dbReference>
<dbReference type="InterPro" id="IPR029054">
    <property type="entry name" value="dUTPase-like"/>
</dbReference>
<dbReference type="InterPro" id="IPR036157">
    <property type="entry name" value="dUTPase-like_sf"/>
</dbReference>
<dbReference type="InterPro" id="IPR033704">
    <property type="entry name" value="dUTPase_trimeric"/>
</dbReference>
<dbReference type="NCBIfam" id="TIGR00576">
    <property type="entry name" value="dut"/>
    <property type="match status" value="1"/>
</dbReference>
<dbReference type="NCBIfam" id="NF001862">
    <property type="entry name" value="PRK00601.1"/>
    <property type="match status" value="1"/>
</dbReference>
<dbReference type="PANTHER" id="PTHR11241">
    <property type="entry name" value="DEOXYURIDINE 5'-TRIPHOSPHATE NUCLEOTIDOHYDROLASE"/>
    <property type="match status" value="1"/>
</dbReference>
<dbReference type="PANTHER" id="PTHR11241:SF0">
    <property type="entry name" value="DEOXYURIDINE 5'-TRIPHOSPHATE NUCLEOTIDOHYDROLASE"/>
    <property type="match status" value="1"/>
</dbReference>
<dbReference type="Pfam" id="PF00692">
    <property type="entry name" value="dUTPase"/>
    <property type="match status" value="1"/>
</dbReference>
<dbReference type="SUPFAM" id="SSF51283">
    <property type="entry name" value="dUTPase-like"/>
    <property type="match status" value="1"/>
</dbReference>
<organism>
    <name type="scientific">Geobacter metallireducens (strain ATCC 53774 / DSM 7210 / GS-15)</name>
    <dbReference type="NCBI Taxonomy" id="269799"/>
    <lineage>
        <taxon>Bacteria</taxon>
        <taxon>Pseudomonadati</taxon>
        <taxon>Thermodesulfobacteriota</taxon>
        <taxon>Desulfuromonadia</taxon>
        <taxon>Geobacterales</taxon>
        <taxon>Geobacteraceae</taxon>
        <taxon>Geobacter</taxon>
    </lineage>
</organism>
<feature type="chain" id="PRO_0000231410" description="Deoxyuridine 5'-triphosphate nucleotidohydrolase">
    <location>
        <begin position="1"/>
        <end position="148"/>
    </location>
</feature>
<feature type="binding site" evidence="1">
    <location>
        <begin position="68"/>
        <end position="70"/>
    </location>
    <ligand>
        <name>substrate</name>
    </ligand>
</feature>
<feature type="binding site" evidence="1">
    <location>
        <position position="81"/>
    </location>
    <ligand>
        <name>substrate</name>
    </ligand>
</feature>
<feature type="binding site" evidence="1">
    <location>
        <begin position="85"/>
        <end position="87"/>
    </location>
    <ligand>
        <name>substrate</name>
    </ligand>
</feature>
<reference key="1">
    <citation type="journal article" date="2009" name="BMC Microbiol.">
        <title>The genome sequence of Geobacter metallireducens: features of metabolism, physiology and regulation common and dissimilar to Geobacter sulfurreducens.</title>
        <authorList>
            <person name="Aklujkar M."/>
            <person name="Krushkal J."/>
            <person name="DiBartolo G."/>
            <person name="Lapidus A."/>
            <person name="Land M.L."/>
            <person name="Lovley D.R."/>
        </authorList>
    </citation>
    <scope>NUCLEOTIDE SEQUENCE [LARGE SCALE GENOMIC DNA]</scope>
    <source>
        <strain>ATCC 53774 / DSM 7210 / GS-15</strain>
    </source>
</reference>
<sequence length="148" mass="16014">MERCVVKVRRVRGGDQNLPCYMTVHAAGMDLCADLVDDLVLNPGERKLVPTGLAIALPDGFEAQIRPRSGLALKHGIALVNSPGTIDPDYRGEIGVILINHGSEPFVVRRGERIAQMVFAPFARAELVEVDELDETARGEGGFGHTGR</sequence>
<accession>Q39V99</accession>
<evidence type="ECO:0000255" key="1">
    <source>
        <dbReference type="HAMAP-Rule" id="MF_00116"/>
    </source>
</evidence>
<comment type="function">
    <text evidence="1">This enzyme is involved in nucleotide metabolism: it produces dUMP, the immediate precursor of thymidine nucleotides and it decreases the intracellular concentration of dUTP so that uracil cannot be incorporated into DNA.</text>
</comment>
<comment type="catalytic activity">
    <reaction evidence="1">
        <text>dUTP + H2O = dUMP + diphosphate + H(+)</text>
        <dbReference type="Rhea" id="RHEA:10248"/>
        <dbReference type="ChEBI" id="CHEBI:15377"/>
        <dbReference type="ChEBI" id="CHEBI:15378"/>
        <dbReference type="ChEBI" id="CHEBI:33019"/>
        <dbReference type="ChEBI" id="CHEBI:61555"/>
        <dbReference type="ChEBI" id="CHEBI:246422"/>
        <dbReference type="EC" id="3.6.1.23"/>
    </reaction>
</comment>
<comment type="cofactor">
    <cofactor evidence="1">
        <name>Mg(2+)</name>
        <dbReference type="ChEBI" id="CHEBI:18420"/>
    </cofactor>
</comment>
<comment type="pathway">
    <text evidence="1">Pyrimidine metabolism; dUMP biosynthesis; dUMP from dCTP (dUTP route): step 2/2.</text>
</comment>
<comment type="similarity">
    <text evidence="1">Belongs to the dUTPase family.</text>
</comment>
<protein>
    <recommendedName>
        <fullName evidence="1">Deoxyuridine 5'-triphosphate nucleotidohydrolase</fullName>
        <shortName evidence="1">dUTPase</shortName>
        <ecNumber evidence="1">3.6.1.23</ecNumber>
    </recommendedName>
    <alternativeName>
        <fullName evidence="1">dUTP pyrophosphatase</fullName>
    </alternativeName>
</protein>
<name>DUT_GEOMG</name>
<proteinExistence type="inferred from homology"/>
<keyword id="KW-0378">Hydrolase</keyword>
<keyword id="KW-0460">Magnesium</keyword>
<keyword id="KW-0479">Metal-binding</keyword>
<keyword id="KW-0546">Nucleotide metabolism</keyword>
<keyword id="KW-1185">Reference proteome</keyword>
<gene>
    <name evidence="1" type="primary">dut</name>
    <name type="ordered locus">Gmet_1593</name>
</gene>